<evidence type="ECO:0000255" key="1">
    <source>
        <dbReference type="HAMAP-Rule" id="MF_00437"/>
    </source>
</evidence>
<gene>
    <name evidence="1" type="primary">ycf4</name>
    <name type="ordered locus">P9515_13231</name>
</gene>
<name>YCF4_PROM5</name>
<accession>A2BXL9</accession>
<proteinExistence type="inferred from homology"/>
<keyword id="KW-0472">Membrane</keyword>
<keyword id="KW-0602">Photosynthesis</keyword>
<keyword id="KW-0793">Thylakoid</keyword>
<keyword id="KW-0812">Transmembrane</keyword>
<keyword id="KW-1133">Transmembrane helix</keyword>
<feature type="chain" id="PRO_1000025949" description="Photosystem I assembly protein Ycf4">
    <location>
        <begin position="1"/>
        <end position="185"/>
    </location>
</feature>
<feature type="transmembrane region" description="Helical" evidence="1">
    <location>
        <begin position="24"/>
        <end position="44"/>
    </location>
</feature>
<feature type="transmembrane region" description="Helical" evidence="1">
    <location>
        <begin position="66"/>
        <end position="86"/>
    </location>
</feature>
<organism>
    <name type="scientific">Prochlorococcus marinus (strain MIT 9515)</name>
    <dbReference type="NCBI Taxonomy" id="167542"/>
    <lineage>
        <taxon>Bacteria</taxon>
        <taxon>Bacillati</taxon>
        <taxon>Cyanobacteriota</taxon>
        <taxon>Cyanophyceae</taxon>
        <taxon>Synechococcales</taxon>
        <taxon>Prochlorococcaceae</taxon>
        <taxon>Prochlorococcus</taxon>
    </lineage>
</organism>
<sequence length="185" mass="20413">MESNLSSFNKIEQQINGSRKISNYLIGGMLTIGGIGFILASISSYTGRDLLPLGNPSSLLFIPQGIIMGAYGVIANLLNIYLWYLVFINFGSGYNSFDKVSQSVEIKRKGLFKDIEVKLNFDEIKSVKLDISEGFNPRRRIALVLKGRKKALPLSGAGELKPLLQVEEEGARLAKFLNVNLEGLK</sequence>
<reference key="1">
    <citation type="journal article" date="2007" name="PLoS Genet.">
        <title>Patterns and implications of gene gain and loss in the evolution of Prochlorococcus.</title>
        <authorList>
            <person name="Kettler G.C."/>
            <person name="Martiny A.C."/>
            <person name="Huang K."/>
            <person name="Zucker J."/>
            <person name="Coleman M.L."/>
            <person name="Rodrigue S."/>
            <person name="Chen F."/>
            <person name="Lapidus A."/>
            <person name="Ferriera S."/>
            <person name="Johnson J."/>
            <person name="Steglich C."/>
            <person name="Church G.M."/>
            <person name="Richardson P."/>
            <person name="Chisholm S.W."/>
        </authorList>
    </citation>
    <scope>NUCLEOTIDE SEQUENCE [LARGE SCALE GENOMIC DNA]</scope>
    <source>
        <strain>MIT 9515</strain>
    </source>
</reference>
<protein>
    <recommendedName>
        <fullName evidence="1">Photosystem I assembly protein Ycf4</fullName>
    </recommendedName>
</protein>
<comment type="function">
    <text evidence="1">Seems to be required for the assembly of the photosystem I complex.</text>
</comment>
<comment type="subcellular location">
    <subcellularLocation>
        <location evidence="1">Cellular thylakoid membrane</location>
        <topology evidence="1">Multi-pass membrane protein</topology>
    </subcellularLocation>
</comment>
<comment type="similarity">
    <text evidence="1">Belongs to the Ycf4 family.</text>
</comment>
<dbReference type="EMBL" id="CP000552">
    <property type="protein sequence ID" value="ABM72530.1"/>
    <property type="molecule type" value="Genomic_DNA"/>
</dbReference>
<dbReference type="RefSeq" id="WP_011820628.1">
    <property type="nucleotide sequence ID" value="NC_008817.1"/>
</dbReference>
<dbReference type="STRING" id="167542.P9515_13231"/>
<dbReference type="GeneID" id="60201533"/>
<dbReference type="KEGG" id="pmc:P9515_13231"/>
<dbReference type="eggNOG" id="ENOG502Z7YX">
    <property type="taxonomic scope" value="Bacteria"/>
</dbReference>
<dbReference type="HOGENOM" id="CLU_095465_0_0_3"/>
<dbReference type="OrthoDB" id="7059574at2"/>
<dbReference type="Proteomes" id="UP000001589">
    <property type="component" value="Chromosome"/>
</dbReference>
<dbReference type="GO" id="GO:0009522">
    <property type="term" value="C:photosystem I"/>
    <property type="evidence" value="ECO:0007669"/>
    <property type="project" value="InterPro"/>
</dbReference>
<dbReference type="GO" id="GO:0031676">
    <property type="term" value="C:plasma membrane-derived thylakoid membrane"/>
    <property type="evidence" value="ECO:0007669"/>
    <property type="project" value="UniProtKB-SubCell"/>
</dbReference>
<dbReference type="GO" id="GO:0015979">
    <property type="term" value="P:photosynthesis"/>
    <property type="evidence" value="ECO:0007669"/>
    <property type="project" value="UniProtKB-UniRule"/>
</dbReference>
<dbReference type="HAMAP" id="MF_00437">
    <property type="entry name" value="Ycf4"/>
    <property type="match status" value="1"/>
</dbReference>
<dbReference type="InterPro" id="IPR003359">
    <property type="entry name" value="PSI_Ycf4_assembly"/>
</dbReference>
<dbReference type="NCBIfam" id="NF002712">
    <property type="entry name" value="PRK02542.1"/>
    <property type="match status" value="1"/>
</dbReference>
<dbReference type="Pfam" id="PF02392">
    <property type="entry name" value="Ycf4"/>
    <property type="match status" value="1"/>
</dbReference>